<proteinExistence type="evidence at protein level"/>
<protein>
    <recommendedName>
        <fullName>Protein hinderin</fullName>
    </recommendedName>
</protein>
<feature type="chain" id="PRO_0000312299" description="Protein hinderin">
    <location>
        <begin position="1"/>
        <end position="612"/>
    </location>
</feature>
<feature type="region of interest" description="Disordered" evidence="3">
    <location>
        <begin position="462"/>
        <end position="484"/>
    </location>
</feature>
<feature type="region of interest" description="Disordered" evidence="3">
    <location>
        <begin position="509"/>
        <end position="598"/>
    </location>
</feature>
<feature type="coiled-coil region" evidence="2">
    <location>
        <begin position="90"/>
        <end position="166"/>
    </location>
</feature>
<feature type="coiled-coil region" evidence="2">
    <location>
        <begin position="362"/>
        <end position="406"/>
    </location>
</feature>
<feature type="compositionally biased region" description="Polar residues" evidence="3">
    <location>
        <begin position="462"/>
        <end position="477"/>
    </location>
</feature>
<feature type="compositionally biased region" description="Polar residues" evidence="3">
    <location>
        <begin position="555"/>
        <end position="568"/>
    </location>
</feature>
<feature type="compositionally biased region" description="Polar residues" evidence="3">
    <location>
        <begin position="575"/>
        <end position="585"/>
    </location>
</feature>
<feature type="modified residue" description="Phosphoserine" evidence="5">
    <location>
        <position position="20"/>
    </location>
</feature>
<feature type="modified residue" description="Phosphoserine" evidence="1">
    <location>
        <position position="178"/>
    </location>
</feature>
<feature type="modified residue" description="Phosphoserine" evidence="5">
    <location>
        <position position="471"/>
    </location>
</feature>
<feature type="modified residue" description="Phosphoserine" evidence="1">
    <location>
        <position position="527"/>
    </location>
</feature>
<feature type="modified residue" description="Phosphoserine" evidence="5">
    <location>
        <position position="558"/>
    </location>
</feature>
<feature type="splice variant" id="VSP_029816" description="In isoform 2." evidence="4">
    <original>ITKKK</original>
    <variation>VSGLL</variation>
    <location>
        <begin position="192"/>
        <end position="196"/>
    </location>
</feature>
<feature type="splice variant" id="VSP_029817" description="In isoform 2." evidence="4">
    <location>
        <begin position="197"/>
        <end position="612"/>
    </location>
</feature>
<dbReference type="EMBL" id="AK167257">
    <property type="protein sequence ID" value="BAE39373.1"/>
    <property type="molecule type" value="mRNA"/>
</dbReference>
<dbReference type="EMBL" id="BC066089">
    <property type="protein sequence ID" value="AAH66089.1"/>
    <property type="molecule type" value="mRNA"/>
</dbReference>
<dbReference type="EMBL" id="AK220161">
    <property type="protein sequence ID" value="BAD90347.1"/>
    <property type="molecule type" value="mRNA"/>
</dbReference>
<dbReference type="RefSeq" id="NP_001028704.2">
    <molecule id="Q6NZK5-1"/>
    <property type="nucleotide sequence ID" value="NM_001033532.3"/>
</dbReference>
<dbReference type="SMR" id="Q6NZK5"/>
<dbReference type="BioGRID" id="230380">
    <property type="interactions" value="1"/>
</dbReference>
<dbReference type="FunCoup" id="Q6NZK5">
    <property type="interactions" value="355"/>
</dbReference>
<dbReference type="STRING" id="10090.ENSMUSP00000095248"/>
<dbReference type="GlyGen" id="Q6NZK5">
    <property type="glycosylation" value="1 site"/>
</dbReference>
<dbReference type="iPTMnet" id="Q6NZK5"/>
<dbReference type="PhosphoSitePlus" id="Q6NZK5"/>
<dbReference type="PaxDb" id="10090-ENSMUSP00000095248"/>
<dbReference type="ProteomicsDB" id="269126">
    <molecule id="Q6NZK5-1"/>
</dbReference>
<dbReference type="ProteomicsDB" id="269127">
    <molecule id="Q6NZK5-2"/>
</dbReference>
<dbReference type="Pumba" id="Q6NZK5"/>
<dbReference type="Antibodypedia" id="49207">
    <property type="antibodies" value="21 antibodies from 9 providers"/>
</dbReference>
<dbReference type="Ensembl" id="ENSMUST00000097643.10">
    <molecule id="Q6NZK5-1"/>
    <property type="protein sequence ID" value="ENSMUSP00000095248.4"/>
    <property type="gene ID" value="ENSMUSG00000033632.18"/>
</dbReference>
<dbReference type="GeneID" id="225289"/>
<dbReference type="KEGG" id="mmu:225289"/>
<dbReference type="UCSC" id="uc008ehg.1">
    <molecule id="Q6NZK5-2"/>
    <property type="organism name" value="mouse"/>
</dbReference>
<dbReference type="UCSC" id="uc008ehj.2">
    <molecule id="Q6NZK5-1"/>
    <property type="organism name" value="mouse"/>
</dbReference>
<dbReference type="AGR" id="MGI:2147376"/>
<dbReference type="MGI" id="MGI:2147376">
    <property type="gene designation" value="AW554918"/>
</dbReference>
<dbReference type="VEuPathDB" id="HostDB:ENSMUSG00000033632"/>
<dbReference type="eggNOG" id="ENOG502QTY3">
    <property type="taxonomic scope" value="Eukaryota"/>
</dbReference>
<dbReference type="GeneTree" id="ENSGT00390000011152"/>
<dbReference type="InParanoid" id="Q6NZK5"/>
<dbReference type="OMA" id="TTCHYES"/>
<dbReference type="OrthoDB" id="5972940at2759"/>
<dbReference type="PhylomeDB" id="Q6NZK5"/>
<dbReference type="BioGRID-ORCS" id="225289">
    <property type="hits" value="2 hits in 54 CRISPR screens"/>
</dbReference>
<dbReference type="ChiTaRS" id="AW554918">
    <property type="organism name" value="mouse"/>
</dbReference>
<dbReference type="PRO" id="PR:Q6NZK5"/>
<dbReference type="Proteomes" id="UP000000589">
    <property type="component" value="Chromosome 18"/>
</dbReference>
<dbReference type="RNAct" id="Q6NZK5">
    <property type="molecule type" value="protein"/>
</dbReference>
<dbReference type="Bgee" id="ENSMUSG00000033632">
    <property type="expression patterns" value="Expressed in animal zygote and 72 other cell types or tissues"/>
</dbReference>
<dbReference type="ExpressionAtlas" id="Q6NZK5">
    <property type="expression patterns" value="baseline and differential"/>
</dbReference>
<dbReference type="InterPro" id="IPR032736">
    <property type="entry name" value="Hinderin"/>
</dbReference>
<dbReference type="PANTHER" id="PTHR28375">
    <property type="entry name" value="PROTEIN HINDERIN"/>
    <property type="match status" value="1"/>
</dbReference>
<dbReference type="PANTHER" id="PTHR28375:SF1">
    <property type="entry name" value="PROTEIN HINDERIN"/>
    <property type="match status" value="1"/>
</dbReference>
<dbReference type="Pfam" id="PF15369">
    <property type="entry name" value="KIAA1328"/>
    <property type="match status" value="1"/>
</dbReference>
<organism>
    <name type="scientific">Mus musculus</name>
    <name type="common">Mouse</name>
    <dbReference type="NCBI Taxonomy" id="10090"/>
    <lineage>
        <taxon>Eukaryota</taxon>
        <taxon>Metazoa</taxon>
        <taxon>Chordata</taxon>
        <taxon>Craniata</taxon>
        <taxon>Vertebrata</taxon>
        <taxon>Euteleostomi</taxon>
        <taxon>Mammalia</taxon>
        <taxon>Eutheria</taxon>
        <taxon>Euarchontoglires</taxon>
        <taxon>Glires</taxon>
        <taxon>Rodentia</taxon>
        <taxon>Myomorpha</taxon>
        <taxon>Muroidea</taxon>
        <taxon>Muridae</taxon>
        <taxon>Murinae</taxon>
        <taxon>Mus</taxon>
        <taxon>Mus</taxon>
    </lineage>
</organism>
<evidence type="ECO:0000250" key="1">
    <source>
        <dbReference type="UniProtKB" id="Q86T90"/>
    </source>
</evidence>
<evidence type="ECO:0000255" key="2"/>
<evidence type="ECO:0000256" key="3">
    <source>
        <dbReference type="SAM" id="MobiDB-lite"/>
    </source>
</evidence>
<evidence type="ECO:0000303" key="4">
    <source>
    </source>
</evidence>
<evidence type="ECO:0007744" key="5">
    <source>
    </source>
</evidence>
<name>K1328_MOUSE</name>
<accession>Q6NZK5</accession>
<accession>Q3TJX2</accession>
<accession>Q571M8</accession>
<keyword id="KW-0025">Alternative splicing</keyword>
<keyword id="KW-0175">Coiled coil</keyword>
<keyword id="KW-0597">Phosphoprotein</keyword>
<keyword id="KW-1185">Reference proteome</keyword>
<reference key="1">
    <citation type="journal article" date="2005" name="Science">
        <title>The transcriptional landscape of the mammalian genome.</title>
        <authorList>
            <person name="Carninci P."/>
            <person name="Kasukawa T."/>
            <person name="Katayama S."/>
            <person name="Gough J."/>
            <person name="Frith M.C."/>
            <person name="Maeda N."/>
            <person name="Oyama R."/>
            <person name="Ravasi T."/>
            <person name="Lenhard B."/>
            <person name="Wells C."/>
            <person name="Kodzius R."/>
            <person name="Shimokawa K."/>
            <person name="Bajic V.B."/>
            <person name="Brenner S.E."/>
            <person name="Batalov S."/>
            <person name="Forrest A.R."/>
            <person name="Zavolan M."/>
            <person name="Davis M.J."/>
            <person name="Wilming L.G."/>
            <person name="Aidinis V."/>
            <person name="Allen J.E."/>
            <person name="Ambesi-Impiombato A."/>
            <person name="Apweiler R."/>
            <person name="Aturaliya R.N."/>
            <person name="Bailey T.L."/>
            <person name="Bansal M."/>
            <person name="Baxter L."/>
            <person name="Beisel K.W."/>
            <person name="Bersano T."/>
            <person name="Bono H."/>
            <person name="Chalk A.M."/>
            <person name="Chiu K.P."/>
            <person name="Choudhary V."/>
            <person name="Christoffels A."/>
            <person name="Clutterbuck D.R."/>
            <person name="Crowe M.L."/>
            <person name="Dalla E."/>
            <person name="Dalrymple B.P."/>
            <person name="de Bono B."/>
            <person name="Della Gatta G."/>
            <person name="di Bernardo D."/>
            <person name="Down T."/>
            <person name="Engstrom P."/>
            <person name="Fagiolini M."/>
            <person name="Faulkner G."/>
            <person name="Fletcher C.F."/>
            <person name="Fukushima T."/>
            <person name="Furuno M."/>
            <person name="Futaki S."/>
            <person name="Gariboldi M."/>
            <person name="Georgii-Hemming P."/>
            <person name="Gingeras T.R."/>
            <person name="Gojobori T."/>
            <person name="Green R.E."/>
            <person name="Gustincich S."/>
            <person name="Harbers M."/>
            <person name="Hayashi Y."/>
            <person name="Hensch T.K."/>
            <person name="Hirokawa N."/>
            <person name="Hill D."/>
            <person name="Huminiecki L."/>
            <person name="Iacono M."/>
            <person name="Ikeo K."/>
            <person name="Iwama A."/>
            <person name="Ishikawa T."/>
            <person name="Jakt M."/>
            <person name="Kanapin A."/>
            <person name="Katoh M."/>
            <person name="Kawasawa Y."/>
            <person name="Kelso J."/>
            <person name="Kitamura H."/>
            <person name="Kitano H."/>
            <person name="Kollias G."/>
            <person name="Krishnan S.P."/>
            <person name="Kruger A."/>
            <person name="Kummerfeld S.K."/>
            <person name="Kurochkin I.V."/>
            <person name="Lareau L.F."/>
            <person name="Lazarevic D."/>
            <person name="Lipovich L."/>
            <person name="Liu J."/>
            <person name="Liuni S."/>
            <person name="McWilliam S."/>
            <person name="Madan Babu M."/>
            <person name="Madera M."/>
            <person name="Marchionni L."/>
            <person name="Matsuda H."/>
            <person name="Matsuzawa S."/>
            <person name="Miki H."/>
            <person name="Mignone F."/>
            <person name="Miyake S."/>
            <person name="Morris K."/>
            <person name="Mottagui-Tabar S."/>
            <person name="Mulder N."/>
            <person name="Nakano N."/>
            <person name="Nakauchi H."/>
            <person name="Ng P."/>
            <person name="Nilsson R."/>
            <person name="Nishiguchi S."/>
            <person name="Nishikawa S."/>
            <person name="Nori F."/>
            <person name="Ohara O."/>
            <person name="Okazaki Y."/>
            <person name="Orlando V."/>
            <person name="Pang K.C."/>
            <person name="Pavan W.J."/>
            <person name="Pavesi G."/>
            <person name="Pesole G."/>
            <person name="Petrovsky N."/>
            <person name="Piazza S."/>
            <person name="Reed J."/>
            <person name="Reid J.F."/>
            <person name="Ring B.Z."/>
            <person name="Ringwald M."/>
            <person name="Rost B."/>
            <person name="Ruan Y."/>
            <person name="Salzberg S.L."/>
            <person name="Sandelin A."/>
            <person name="Schneider C."/>
            <person name="Schoenbach C."/>
            <person name="Sekiguchi K."/>
            <person name="Semple C.A."/>
            <person name="Seno S."/>
            <person name="Sessa L."/>
            <person name="Sheng Y."/>
            <person name="Shibata Y."/>
            <person name="Shimada H."/>
            <person name="Shimada K."/>
            <person name="Silva D."/>
            <person name="Sinclair B."/>
            <person name="Sperling S."/>
            <person name="Stupka E."/>
            <person name="Sugiura K."/>
            <person name="Sultana R."/>
            <person name="Takenaka Y."/>
            <person name="Taki K."/>
            <person name="Tammoja K."/>
            <person name="Tan S.L."/>
            <person name="Tang S."/>
            <person name="Taylor M.S."/>
            <person name="Tegner J."/>
            <person name="Teichmann S.A."/>
            <person name="Ueda H.R."/>
            <person name="van Nimwegen E."/>
            <person name="Verardo R."/>
            <person name="Wei C.L."/>
            <person name="Yagi K."/>
            <person name="Yamanishi H."/>
            <person name="Zabarovsky E."/>
            <person name="Zhu S."/>
            <person name="Zimmer A."/>
            <person name="Hide W."/>
            <person name="Bult C."/>
            <person name="Grimmond S.M."/>
            <person name="Teasdale R.D."/>
            <person name="Liu E.T."/>
            <person name="Brusic V."/>
            <person name="Quackenbush J."/>
            <person name="Wahlestedt C."/>
            <person name="Mattick J.S."/>
            <person name="Hume D.A."/>
            <person name="Kai C."/>
            <person name="Sasaki D."/>
            <person name="Tomaru Y."/>
            <person name="Fukuda S."/>
            <person name="Kanamori-Katayama M."/>
            <person name="Suzuki M."/>
            <person name="Aoki J."/>
            <person name="Arakawa T."/>
            <person name="Iida J."/>
            <person name="Imamura K."/>
            <person name="Itoh M."/>
            <person name="Kato T."/>
            <person name="Kawaji H."/>
            <person name="Kawagashira N."/>
            <person name="Kawashima T."/>
            <person name="Kojima M."/>
            <person name="Kondo S."/>
            <person name="Konno H."/>
            <person name="Nakano K."/>
            <person name="Ninomiya N."/>
            <person name="Nishio T."/>
            <person name="Okada M."/>
            <person name="Plessy C."/>
            <person name="Shibata K."/>
            <person name="Shiraki T."/>
            <person name="Suzuki S."/>
            <person name="Tagami M."/>
            <person name="Waki K."/>
            <person name="Watahiki A."/>
            <person name="Okamura-Oho Y."/>
            <person name="Suzuki H."/>
            <person name="Kawai J."/>
            <person name="Hayashizaki Y."/>
        </authorList>
    </citation>
    <scope>NUCLEOTIDE SEQUENCE [LARGE SCALE MRNA] (ISOFORM 2)</scope>
    <source>
        <strain>C57BL/6J</strain>
    </source>
</reference>
<reference key="2">
    <citation type="journal article" date="2004" name="Genome Res.">
        <title>The status, quality, and expansion of the NIH full-length cDNA project: the Mammalian Gene Collection (MGC).</title>
        <authorList>
            <consortium name="The MGC Project Team"/>
        </authorList>
    </citation>
    <scope>NUCLEOTIDE SEQUENCE [LARGE SCALE MRNA] OF 149-612 (ISOFORM 1)</scope>
    <source>
        <strain>C57BL/6J</strain>
        <tissue>Brain</tissue>
    </source>
</reference>
<reference key="3">
    <citation type="submission" date="2005-02" db="EMBL/GenBank/DDBJ databases">
        <title>Prediction of the coding sequences of mouse homologues of KIAA gene. The complete nucleotide sequences of mouse KIAA-homologous cDNAs identified by screening of terminal sequences of cDNA clones randomly sampled from size-fractionated libraries.</title>
        <authorList>
            <person name="Okazaki N."/>
            <person name="Kikuno R.F."/>
            <person name="Ohara R."/>
            <person name="Inamoto S."/>
            <person name="Nagase T."/>
            <person name="Ohara O."/>
            <person name="Koga H."/>
        </authorList>
    </citation>
    <scope>NUCLEOTIDE SEQUENCE [LARGE SCALE MRNA] OF 390-612</scope>
    <source>
        <tissue>Embryonic tail</tissue>
    </source>
</reference>
<reference key="4">
    <citation type="journal article" date="2010" name="Cell">
        <title>A tissue-specific atlas of mouse protein phosphorylation and expression.</title>
        <authorList>
            <person name="Huttlin E.L."/>
            <person name="Jedrychowski M.P."/>
            <person name="Elias J.E."/>
            <person name="Goswami T."/>
            <person name="Rad R."/>
            <person name="Beausoleil S.A."/>
            <person name="Villen J."/>
            <person name="Haas W."/>
            <person name="Sowa M.E."/>
            <person name="Gygi S.P."/>
        </authorList>
    </citation>
    <scope>PHOSPHORYLATION [LARGE SCALE ANALYSIS] AT SER-20; SER-471 AND SER-558</scope>
    <scope>IDENTIFICATION BY MASS SPECTROMETRY [LARGE SCALE ANALYSIS]</scope>
    <source>
        <tissue>Kidney</tissue>
        <tissue>Testis</tissue>
    </source>
</reference>
<comment type="function">
    <text evidence="1">Competes with SMC1 for binding to SMC3. May affect the availability of SMC3 to engage in the formation of multimeric protein complexes.</text>
</comment>
<comment type="subunit">
    <text evidence="1">Interacts (via N- and C-terminal domains) with SMC3 (via central hinge region).</text>
</comment>
<comment type="alternative products">
    <event type="alternative splicing"/>
    <isoform>
        <id>Q6NZK5-1</id>
        <name>1</name>
        <sequence type="displayed"/>
    </isoform>
    <isoform>
        <id>Q6NZK5-2</id>
        <name>2</name>
        <sequence type="described" ref="VSP_029816 VSP_029817"/>
    </isoform>
</comment>
<gene>
    <name type="primary">Kiaa1328</name>
</gene>
<sequence length="612" mass="69793">MAGAAGPFLPGSAFWSRDFSDEDQSVAYVPGISTEGNTRSRVKLINPKVDVKVKASRVTDASVSMESLKGAGDSVAEQNFCKRGMKSASLKDLCLEDKRRIANLIKELARVSEEKEVTEERLKTEQESFEKKIRQLEEQNELIIKEREALQLQYRECQELLSLYQKYLSEQQEKLTLSLSELGAARAQEQQITKKKNTPQCSLMDLDGSFLSVARPQNYGQTKARPKSANQVSESFTELRNNSLRPITLHHPKEDLERMSTKTRTCTYESLGRRLINAAPIEKSLPVELKIKEYPNLPPTPSSQYCGHKCSESGAYVHENYHPTNMAPQCCKTHPESCSHCRIPWASQMHDRVILQPRETDIEKQLSEDRRQQLMLQKMELEIEKERLQHLLAQQETKLLLKQQQLHQSRLDYNWLRTQAMFKSRELVADKEFPKPDLDMNGSVSGPSLWKPKCDGWMRGTSTSFKKCPDSPNSGQNQREKKTVEFQSRVENGIQWTCQQNDICRPQRETVTGVRKDASTSPMSTRSPKEPLTPASLSSQHKTSRYETSLLDLVQSLSPNSAPKSQPHPSRAAGTWSTLRPTPQKSIWKKVGTRRSPEDLEENQILEDIFFI</sequence>